<dbReference type="EC" id="6.3.5.-" evidence="1"/>
<dbReference type="EMBL" id="CP000633">
    <property type="protein sequence ID" value="ACM36277.1"/>
    <property type="molecule type" value="Genomic_DNA"/>
</dbReference>
<dbReference type="RefSeq" id="WP_015915700.1">
    <property type="nucleotide sequence ID" value="NC_011989.1"/>
</dbReference>
<dbReference type="SMR" id="B9JVJ7"/>
<dbReference type="STRING" id="311402.Avi_1781"/>
<dbReference type="GeneID" id="60682359"/>
<dbReference type="KEGG" id="avi:Avi_1781"/>
<dbReference type="eggNOG" id="COG0064">
    <property type="taxonomic scope" value="Bacteria"/>
</dbReference>
<dbReference type="HOGENOM" id="CLU_019240_0_0_5"/>
<dbReference type="Proteomes" id="UP000001596">
    <property type="component" value="Chromosome 1"/>
</dbReference>
<dbReference type="GO" id="GO:0050566">
    <property type="term" value="F:asparaginyl-tRNA synthase (glutamine-hydrolyzing) activity"/>
    <property type="evidence" value="ECO:0007669"/>
    <property type="project" value="RHEA"/>
</dbReference>
<dbReference type="GO" id="GO:0005524">
    <property type="term" value="F:ATP binding"/>
    <property type="evidence" value="ECO:0007669"/>
    <property type="project" value="UniProtKB-KW"/>
</dbReference>
<dbReference type="GO" id="GO:0050567">
    <property type="term" value="F:glutaminyl-tRNA synthase (glutamine-hydrolyzing) activity"/>
    <property type="evidence" value="ECO:0007669"/>
    <property type="project" value="UniProtKB-UniRule"/>
</dbReference>
<dbReference type="GO" id="GO:0070681">
    <property type="term" value="P:glutaminyl-tRNAGln biosynthesis via transamidation"/>
    <property type="evidence" value="ECO:0007669"/>
    <property type="project" value="TreeGrafter"/>
</dbReference>
<dbReference type="GO" id="GO:0006412">
    <property type="term" value="P:translation"/>
    <property type="evidence" value="ECO:0007669"/>
    <property type="project" value="UniProtKB-UniRule"/>
</dbReference>
<dbReference type="FunFam" id="1.10.10.410:FF:000001">
    <property type="entry name" value="Aspartyl/glutamyl-tRNA(Asn/Gln) amidotransferase subunit B"/>
    <property type="match status" value="1"/>
</dbReference>
<dbReference type="FunFam" id="1.10.150.380:FF:000001">
    <property type="entry name" value="Aspartyl/glutamyl-tRNA(Asn/Gln) amidotransferase subunit B"/>
    <property type="match status" value="1"/>
</dbReference>
<dbReference type="Gene3D" id="1.10.10.410">
    <property type="match status" value="1"/>
</dbReference>
<dbReference type="Gene3D" id="1.10.150.380">
    <property type="entry name" value="GatB domain, N-terminal subdomain"/>
    <property type="match status" value="1"/>
</dbReference>
<dbReference type="HAMAP" id="MF_00121">
    <property type="entry name" value="GatB"/>
    <property type="match status" value="1"/>
</dbReference>
<dbReference type="InterPro" id="IPR017959">
    <property type="entry name" value="Asn/Gln-tRNA_amidoTrfase_suB/E"/>
</dbReference>
<dbReference type="InterPro" id="IPR006075">
    <property type="entry name" value="Asn/Gln-tRNA_Trfase_suB/E_cat"/>
</dbReference>
<dbReference type="InterPro" id="IPR018027">
    <property type="entry name" value="Asn/Gln_amidotransferase"/>
</dbReference>
<dbReference type="InterPro" id="IPR003789">
    <property type="entry name" value="Asn/Gln_tRNA_amidoTrase-B-like"/>
</dbReference>
<dbReference type="InterPro" id="IPR004413">
    <property type="entry name" value="GatB"/>
</dbReference>
<dbReference type="InterPro" id="IPR042114">
    <property type="entry name" value="GatB_C_1"/>
</dbReference>
<dbReference type="InterPro" id="IPR023168">
    <property type="entry name" value="GatB_Yqey_C_2"/>
</dbReference>
<dbReference type="InterPro" id="IPR017958">
    <property type="entry name" value="Gln-tRNA_amidoTrfase_suB_CS"/>
</dbReference>
<dbReference type="InterPro" id="IPR014746">
    <property type="entry name" value="Gln_synth/guanido_kin_cat_dom"/>
</dbReference>
<dbReference type="NCBIfam" id="TIGR00133">
    <property type="entry name" value="gatB"/>
    <property type="match status" value="1"/>
</dbReference>
<dbReference type="NCBIfam" id="NF004012">
    <property type="entry name" value="PRK05477.1-2"/>
    <property type="match status" value="1"/>
</dbReference>
<dbReference type="NCBIfam" id="NF004014">
    <property type="entry name" value="PRK05477.1-4"/>
    <property type="match status" value="1"/>
</dbReference>
<dbReference type="NCBIfam" id="NF004015">
    <property type="entry name" value="PRK05477.1-5"/>
    <property type="match status" value="1"/>
</dbReference>
<dbReference type="PANTHER" id="PTHR11659">
    <property type="entry name" value="GLUTAMYL-TRNA GLN AMIDOTRANSFERASE SUBUNIT B MITOCHONDRIAL AND PROKARYOTIC PET112-RELATED"/>
    <property type="match status" value="1"/>
</dbReference>
<dbReference type="PANTHER" id="PTHR11659:SF0">
    <property type="entry name" value="GLUTAMYL-TRNA(GLN) AMIDOTRANSFERASE SUBUNIT B, MITOCHONDRIAL"/>
    <property type="match status" value="1"/>
</dbReference>
<dbReference type="Pfam" id="PF02934">
    <property type="entry name" value="GatB_N"/>
    <property type="match status" value="1"/>
</dbReference>
<dbReference type="Pfam" id="PF02637">
    <property type="entry name" value="GatB_Yqey"/>
    <property type="match status" value="1"/>
</dbReference>
<dbReference type="SMART" id="SM00845">
    <property type="entry name" value="GatB_Yqey"/>
    <property type="match status" value="1"/>
</dbReference>
<dbReference type="SUPFAM" id="SSF89095">
    <property type="entry name" value="GatB/YqeY motif"/>
    <property type="match status" value="1"/>
</dbReference>
<dbReference type="SUPFAM" id="SSF55931">
    <property type="entry name" value="Glutamine synthetase/guanido kinase"/>
    <property type="match status" value="1"/>
</dbReference>
<dbReference type="PROSITE" id="PS01234">
    <property type="entry name" value="GATB"/>
    <property type="match status" value="1"/>
</dbReference>
<comment type="function">
    <text evidence="1">Allows the formation of correctly charged Asn-tRNA(Asn) or Gln-tRNA(Gln) through the transamidation of misacylated Asp-tRNA(Asn) or Glu-tRNA(Gln) in organisms which lack either or both of asparaginyl-tRNA or glutaminyl-tRNA synthetases. The reaction takes place in the presence of glutamine and ATP through an activated phospho-Asp-tRNA(Asn) or phospho-Glu-tRNA(Gln).</text>
</comment>
<comment type="catalytic activity">
    <reaction evidence="1">
        <text>L-glutamyl-tRNA(Gln) + L-glutamine + ATP + H2O = L-glutaminyl-tRNA(Gln) + L-glutamate + ADP + phosphate + H(+)</text>
        <dbReference type="Rhea" id="RHEA:17521"/>
        <dbReference type="Rhea" id="RHEA-COMP:9681"/>
        <dbReference type="Rhea" id="RHEA-COMP:9684"/>
        <dbReference type="ChEBI" id="CHEBI:15377"/>
        <dbReference type="ChEBI" id="CHEBI:15378"/>
        <dbReference type="ChEBI" id="CHEBI:29985"/>
        <dbReference type="ChEBI" id="CHEBI:30616"/>
        <dbReference type="ChEBI" id="CHEBI:43474"/>
        <dbReference type="ChEBI" id="CHEBI:58359"/>
        <dbReference type="ChEBI" id="CHEBI:78520"/>
        <dbReference type="ChEBI" id="CHEBI:78521"/>
        <dbReference type="ChEBI" id="CHEBI:456216"/>
    </reaction>
</comment>
<comment type="catalytic activity">
    <reaction evidence="1">
        <text>L-aspartyl-tRNA(Asn) + L-glutamine + ATP + H2O = L-asparaginyl-tRNA(Asn) + L-glutamate + ADP + phosphate + 2 H(+)</text>
        <dbReference type="Rhea" id="RHEA:14513"/>
        <dbReference type="Rhea" id="RHEA-COMP:9674"/>
        <dbReference type="Rhea" id="RHEA-COMP:9677"/>
        <dbReference type="ChEBI" id="CHEBI:15377"/>
        <dbReference type="ChEBI" id="CHEBI:15378"/>
        <dbReference type="ChEBI" id="CHEBI:29985"/>
        <dbReference type="ChEBI" id="CHEBI:30616"/>
        <dbReference type="ChEBI" id="CHEBI:43474"/>
        <dbReference type="ChEBI" id="CHEBI:58359"/>
        <dbReference type="ChEBI" id="CHEBI:78515"/>
        <dbReference type="ChEBI" id="CHEBI:78516"/>
        <dbReference type="ChEBI" id="CHEBI:456216"/>
    </reaction>
</comment>
<comment type="subunit">
    <text evidence="1">Heterotrimer of A, B and C subunits.</text>
</comment>
<comment type="similarity">
    <text evidence="1">Belongs to the GatB/GatE family. GatB subfamily.</text>
</comment>
<accession>B9JVJ7</accession>
<feature type="chain" id="PRO_1000122500" description="Aspartyl/glutamyl-tRNA(Asn/Gln) amidotransferase subunit B">
    <location>
        <begin position="1"/>
        <end position="500"/>
    </location>
</feature>
<protein>
    <recommendedName>
        <fullName evidence="1">Aspartyl/glutamyl-tRNA(Asn/Gln) amidotransferase subunit B</fullName>
        <shortName evidence="1">Asp/Glu-ADT subunit B</shortName>
        <ecNumber evidence="1">6.3.5.-</ecNumber>
    </recommendedName>
</protein>
<keyword id="KW-0067">ATP-binding</keyword>
<keyword id="KW-0436">Ligase</keyword>
<keyword id="KW-0547">Nucleotide-binding</keyword>
<keyword id="KW-0648">Protein biosynthesis</keyword>
<keyword id="KW-1185">Reference proteome</keyword>
<evidence type="ECO:0000255" key="1">
    <source>
        <dbReference type="HAMAP-Rule" id="MF_00121"/>
    </source>
</evidence>
<gene>
    <name evidence="1" type="primary">gatB</name>
    <name type="ordered locus">Avi_1781</name>
</gene>
<sequence length="500" mass="54460">MTLVDTRTPDPKRLIPGATGDWEIVIGMEVHAQVLSQSKLFSGASTTFGNAPNDNVSLVDAAMPGMLPVINEECVRQAVRTGLGLKAKINKRSIFDRKNYFYPDLPQGYQISQFKDPIVGEGKIIISLGPDRQGNFEDIEIGIERLHLEQDAGKSMHDQHPTMSYVDLNRSGVALMEIVSKPDMRSSDEAKAYMTKLRSIVRYLGTCDGNMDEGSMRADVNVSVRKPGGEFGTRCEIKNVNSIRFIGQAIEYEARRQIAILEDGGSIDQETRLFDPGKGETRSMRSKEDAHDYRYFPDPDLLPLEFDDAFVQALKKDLPELPDDKKARFVASLGLSVYDASVLVSEKAIADYYEAVAAGRDGKIAANWVINDLLGALNKAGKGIEETPVSPAQLGGIIDLIKAETISGKIAKDLFEIVFNEGGDPADIVESRGMKQVTDTGAIEKAVDEIIAANPDQVAKVLAKPTLAGWFVGQVMKATGGKANPQAVQALVKAKLGLEE</sequence>
<organism>
    <name type="scientific">Allorhizobium ampelinum (strain ATCC BAA-846 / DSM 112012 / S4)</name>
    <name type="common">Agrobacterium vitis (strain S4)</name>
    <dbReference type="NCBI Taxonomy" id="311402"/>
    <lineage>
        <taxon>Bacteria</taxon>
        <taxon>Pseudomonadati</taxon>
        <taxon>Pseudomonadota</taxon>
        <taxon>Alphaproteobacteria</taxon>
        <taxon>Hyphomicrobiales</taxon>
        <taxon>Rhizobiaceae</taxon>
        <taxon>Rhizobium/Agrobacterium group</taxon>
        <taxon>Allorhizobium</taxon>
        <taxon>Allorhizobium ampelinum</taxon>
    </lineage>
</organism>
<reference key="1">
    <citation type="journal article" date="2009" name="J. Bacteriol.">
        <title>Genome sequences of three Agrobacterium biovars help elucidate the evolution of multichromosome genomes in bacteria.</title>
        <authorList>
            <person name="Slater S.C."/>
            <person name="Goldman B.S."/>
            <person name="Goodner B."/>
            <person name="Setubal J.C."/>
            <person name="Farrand S.K."/>
            <person name="Nester E.W."/>
            <person name="Burr T.J."/>
            <person name="Banta L."/>
            <person name="Dickerman A.W."/>
            <person name="Paulsen I."/>
            <person name="Otten L."/>
            <person name="Suen G."/>
            <person name="Welch R."/>
            <person name="Almeida N.F."/>
            <person name="Arnold F."/>
            <person name="Burton O.T."/>
            <person name="Du Z."/>
            <person name="Ewing A."/>
            <person name="Godsy E."/>
            <person name="Heisel S."/>
            <person name="Houmiel K.L."/>
            <person name="Jhaveri J."/>
            <person name="Lu J."/>
            <person name="Miller N.M."/>
            <person name="Norton S."/>
            <person name="Chen Q."/>
            <person name="Phoolcharoen W."/>
            <person name="Ohlin V."/>
            <person name="Ondrusek D."/>
            <person name="Pride N."/>
            <person name="Stricklin S.L."/>
            <person name="Sun J."/>
            <person name="Wheeler C."/>
            <person name="Wilson L."/>
            <person name="Zhu H."/>
            <person name="Wood D.W."/>
        </authorList>
    </citation>
    <scope>NUCLEOTIDE SEQUENCE [LARGE SCALE GENOMIC DNA]</scope>
    <source>
        <strain>ATCC BAA-846 / DSM 112012 / S4</strain>
    </source>
</reference>
<proteinExistence type="inferred from homology"/>
<name>GATB_ALLAM</name>